<keyword id="KW-0997">Cell inner membrane</keyword>
<keyword id="KW-1003">Cell membrane</keyword>
<keyword id="KW-0285">Flavoprotein</keyword>
<keyword id="KW-0288">FMN</keyword>
<keyword id="KW-0472">Membrane</keyword>
<keyword id="KW-0560">Oxidoreductase</keyword>
<keyword id="KW-1185">Reference proteome</keyword>
<comment type="function">
    <text evidence="1">Catalyzes the conversion of L-lactate to pyruvate. Is coupled to the respiratory chain.</text>
</comment>
<comment type="catalytic activity">
    <reaction evidence="1">
        <text>(S)-lactate + A = pyruvate + AH2</text>
        <dbReference type="Rhea" id="RHEA:45816"/>
        <dbReference type="ChEBI" id="CHEBI:13193"/>
        <dbReference type="ChEBI" id="CHEBI:15361"/>
        <dbReference type="ChEBI" id="CHEBI:16651"/>
        <dbReference type="ChEBI" id="CHEBI:17499"/>
    </reaction>
</comment>
<comment type="cofactor">
    <cofactor evidence="1">
        <name>FMN</name>
        <dbReference type="ChEBI" id="CHEBI:58210"/>
    </cofactor>
</comment>
<comment type="subcellular location">
    <subcellularLocation>
        <location evidence="1">Cell inner membrane</location>
        <topology evidence="1">Peripheral membrane protein</topology>
    </subcellularLocation>
</comment>
<comment type="similarity">
    <text evidence="1">Belongs to the FMN-dependent alpha-hydroxy acid dehydrogenase family.</text>
</comment>
<gene>
    <name evidence="1" type="primary">lldD</name>
    <name type="ordered locus">ECS88_4022</name>
</gene>
<protein>
    <recommendedName>
        <fullName evidence="1">L-lactate dehydrogenase</fullName>
        <ecNumber evidence="1">1.1.-.-</ecNumber>
    </recommendedName>
</protein>
<dbReference type="EC" id="1.1.-.-" evidence="1"/>
<dbReference type="EMBL" id="CU928161">
    <property type="protein sequence ID" value="CAR05231.1"/>
    <property type="molecule type" value="Genomic_DNA"/>
</dbReference>
<dbReference type="RefSeq" id="WP_000586970.1">
    <property type="nucleotide sequence ID" value="NC_011742.1"/>
</dbReference>
<dbReference type="SMR" id="B7MFG9"/>
<dbReference type="KEGG" id="ecz:ECS88_4022"/>
<dbReference type="HOGENOM" id="CLU_020639_0_0_6"/>
<dbReference type="Proteomes" id="UP000000747">
    <property type="component" value="Chromosome"/>
</dbReference>
<dbReference type="GO" id="GO:0005886">
    <property type="term" value="C:plasma membrane"/>
    <property type="evidence" value="ECO:0007669"/>
    <property type="project" value="UniProtKB-SubCell"/>
</dbReference>
<dbReference type="GO" id="GO:0010181">
    <property type="term" value="F:FMN binding"/>
    <property type="evidence" value="ECO:0007669"/>
    <property type="project" value="InterPro"/>
</dbReference>
<dbReference type="GO" id="GO:0004459">
    <property type="term" value="F:L-lactate dehydrogenase activity"/>
    <property type="evidence" value="ECO:0007669"/>
    <property type="project" value="UniProtKB-UniRule"/>
</dbReference>
<dbReference type="GO" id="GO:0009060">
    <property type="term" value="P:aerobic respiration"/>
    <property type="evidence" value="ECO:0007669"/>
    <property type="project" value="TreeGrafter"/>
</dbReference>
<dbReference type="GO" id="GO:0006089">
    <property type="term" value="P:lactate metabolic process"/>
    <property type="evidence" value="ECO:0007669"/>
    <property type="project" value="UniProtKB-UniRule"/>
</dbReference>
<dbReference type="CDD" id="cd02809">
    <property type="entry name" value="alpha_hydroxyacid_oxid_FMN"/>
    <property type="match status" value="1"/>
</dbReference>
<dbReference type="FunFam" id="3.20.20.70:FF:000029">
    <property type="entry name" value="L-lactate dehydrogenase"/>
    <property type="match status" value="1"/>
</dbReference>
<dbReference type="Gene3D" id="3.20.20.70">
    <property type="entry name" value="Aldolase class I"/>
    <property type="match status" value="1"/>
</dbReference>
<dbReference type="HAMAP" id="MF_01559">
    <property type="entry name" value="L_lact_dehydr"/>
    <property type="match status" value="1"/>
</dbReference>
<dbReference type="InterPro" id="IPR013785">
    <property type="entry name" value="Aldolase_TIM"/>
</dbReference>
<dbReference type="InterPro" id="IPR012133">
    <property type="entry name" value="Alpha-hydoxy_acid_DH_FMN"/>
</dbReference>
<dbReference type="InterPro" id="IPR000262">
    <property type="entry name" value="FMN-dep_DH"/>
</dbReference>
<dbReference type="InterPro" id="IPR037396">
    <property type="entry name" value="FMN_HAD"/>
</dbReference>
<dbReference type="InterPro" id="IPR008259">
    <property type="entry name" value="FMN_hydac_DH_AS"/>
</dbReference>
<dbReference type="InterPro" id="IPR020920">
    <property type="entry name" value="LldD"/>
</dbReference>
<dbReference type="NCBIfam" id="NF033901">
    <property type="entry name" value="L_lactate_LldD"/>
    <property type="match status" value="1"/>
</dbReference>
<dbReference type="NCBIfam" id="NF008398">
    <property type="entry name" value="PRK11197.1"/>
    <property type="match status" value="1"/>
</dbReference>
<dbReference type="PANTHER" id="PTHR10578:SF85">
    <property type="entry name" value="L-LACTATE DEHYDROGENASE"/>
    <property type="match status" value="1"/>
</dbReference>
<dbReference type="PANTHER" id="PTHR10578">
    <property type="entry name" value="S -2-HYDROXY-ACID OXIDASE-RELATED"/>
    <property type="match status" value="1"/>
</dbReference>
<dbReference type="Pfam" id="PF01070">
    <property type="entry name" value="FMN_dh"/>
    <property type="match status" value="1"/>
</dbReference>
<dbReference type="PIRSF" id="PIRSF000138">
    <property type="entry name" value="Al-hdrx_acd_dh"/>
    <property type="match status" value="1"/>
</dbReference>
<dbReference type="SUPFAM" id="SSF51395">
    <property type="entry name" value="FMN-linked oxidoreductases"/>
    <property type="match status" value="1"/>
</dbReference>
<dbReference type="PROSITE" id="PS00557">
    <property type="entry name" value="FMN_HYDROXY_ACID_DH_1"/>
    <property type="match status" value="1"/>
</dbReference>
<dbReference type="PROSITE" id="PS51349">
    <property type="entry name" value="FMN_HYDROXY_ACID_DH_2"/>
    <property type="match status" value="1"/>
</dbReference>
<organism>
    <name type="scientific">Escherichia coli O45:K1 (strain S88 / ExPEC)</name>
    <dbReference type="NCBI Taxonomy" id="585035"/>
    <lineage>
        <taxon>Bacteria</taxon>
        <taxon>Pseudomonadati</taxon>
        <taxon>Pseudomonadota</taxon>
        <taxon>Gammaproteobacteria</taxon>
        <taxon>Enterobacterales</taxon>
        <taxon>Enterobacteriaceae</taxon>
        <taxon>Escherichia</taxon>
    </lineage>
</organism>
<name>LLDD_ECO45</name>
<reference key="1">
    <citation type="journal article" date="2009" name="PLoS Genet.">
        <title>Organised genome dynamics in the Escherichia coli species results in highly diverse adaptive paths.</title>
        <authorList>
            <person name="Touchon M."/>
            <person name="Hoede C."/>
            <person name="Tenaillon O."/>
            <person name="Barbe V."/>
            <person name="Baeriswyl S."/>
            <person name="Bidet P."/>
            <person name="Bingen E."/>
            <person name="Bonacorsi S."/>
            <person name="Bouchier C."/>
            <person name="Bouvet O."/>
            <person name="Calteau A."/>
            <person name="Chiapello H."/>
            <person name="Clermont O."/>
            <person name="Cruveiller S."/>
            <person name="Danchin A."/>
            <person name="Diard M."/>
            <person name="Dossat C."/>
            <person name="Karoui M.E."/>
            <person name="Frapy E."/>
            <person name="Garry L."/>
            <person name="Ghigo J.M."/>
            <person name="Gilles A.M."/>
            <person name="Johnson J."/>
            <person name="Le Bouguenec C."/>
            <person name="Lescat M."/>
            <person name="Mangenot S."/>
            <person name="Martinez-Jehanne V."/>
            <person name="Matic I."/>
            <person name="Nassif X."/>
            <person name="Oztas S."/>
            <person name="Petit M.A."/>
            <person name="Pichon C."/>
            <person name="Rouy Z."/>
            <person name="Ruf C.S."/>
            <person name="Schneider D."/>
            <person name="Tourret J."/>
            <person name="Vacherie B."/>
            <person name="Vallenet D."/>
            <person name="Medigue C."/>
            <person name="Rocha E.P.C."/>
            <person name="Denamur E."/>
        </authorList>
    </citation>
    <scope>NUCLEOTIDE SEQUENCE [LARGE SCALE GENOMIC DNA]</scope>
    <source>
        <strain>S88 / ExPEC</strain>
    </source>
</reference>
<sequence>MIISAASDYRAAAQRILPPFLFHYMDGGAYSEYTLRRNVEDLSEVALRQRILKNMSDLSLETTLFNEKLSMPVALGPVGLCGMYARRGEVQAAKAADAHGIPFTLSTVSVCPIEEVAPAIKRPMWFQLYVLRDRGFMRNALERAKAAGCSTLVFTVDMPTPGARYRDAHSGMSGPNAAMRRYLQAVTHPQWAWDVGLNGRPHDLGNISAYLGKPTGLEDYIGWLANNFDPSISWKDLEWIRDFWDGPMVIKGILDPEDARDAVRFGADGIVVSNHGGRQLDGVLSSARALPAIADAVKGDIAILADSGIRNGLDVVRMIALGADTVLLGRAFLYALATAGQAGVANLLNLIEKEMKVAMTLTGAKSISEITQDSLVQVLGKELPAALAPMAKGNAA</sequence>
<evidence type="ECO:0000255" key="1">
    <source>
        <dbReference type="HAMAP-Rule" id="MF_01559"/>
    </source>
</evidence>
<accession>B7MFG9</accession>
<proteinExistence type="inferred from homology"/>
<feature type="chain" id="PRO_0000383427" description="L-lactate dehydrogenase">
    <location>
        <begin position="1"/>
        <end position="396"/>
    </location>
</feature>
<feature type="domain" description="FMN hydroxy acid dehydrogenase" evidence="1">
    <location>
        <begin position="1"/>
        <end position="380"/>
    </location>
</feature>
<feature type="active site" description="Proton acceptor" evidence="1">
    <location>
        <position position="275"/>
    </location>
</feature>
<feature type="binding site" evidence="1">
    <location>
        <position position="24"/>
    </location>
    <ligand>
        <name>substrate</name>
    </ligand>
</feature>
<feature type="binding site" evidence="1">
    <location>
        <position position="106"/>
    </location>
    <ligand>
        <name>FMN</name>
        <dbReference type="ChEBI" id="CHEBI:58210"/>
    </ligand>
</feature>
<feature type="binding site" evidence="1">
    <location>
        <position position="127"/>
    </location>
    <ligand>
        <name>FMN</name>
        <dbReference type="ChEBI" id="CHEBI:58210"/>
    </ligand>
</feature>
<feature type="binding site" evidence="1">
    <location>
        <position position="129"/>
    </location>
    <ligand>
        <name>substrate</name>
    </ligand>
</feature>
<feature type="binding site" evidence="1">
    <location>
        <position position="155"/>
    </location>
    <ligand>
        <name>FMN</name>
        <dbReference type="ChEBI" id="CHEBI:58210"/>
    </ligand>
</feature>
<feature type="binding site" evidence="1">
    <location>
        <position position="164"/>
    </location>
    <ligand>
        <name>substrate</name>
    </ligand>
</feature>
<feature type="binding site" evidence="1">
    <location>
        <position position="251"/>
    </location>
    <ligand>
        <name>FMN</name>
        <dbReference type="ChEBI" id="CHEBI:58210"/>
    </ligand>
</feature>
<feature type="binding site" evidence="1">
    <location>
        <position position="278"/>
    </location>
    <ligand>
        <name>substrate</name>
    </ligand>
</feature>
<feature type="binding site" evidence="1">
    <location>
        <begin position="306"/>
        <end position="330"/>
    </location>
    <ligand>
        <name>FMN</name>
        <dbReference type="ChEBI" id="CHEBI:58210"/>
    </ligand>
</feature>